<keyword id="KW-0963">Cytoplasm</keyword>
<keyword id="KW-0539">Nucleus</keyword>
<keyword id="KW-0597">Phosphoprotein</keyword>
<keyword id="KW-1185">Reference proteome</keyword>
<proteinExistence type="evidence at protein level"/>
<protein>
    <recommendedName>
        <fullName evidence="8">Inclusion body clearance protein IML2</fullName>
    </recommendedName>
    <alternativeName>
        <fullName evidence="6">Increased minichromosome loss protein 2</fullName>
    </alternativeName>
</protein>
<sequence length="731" mass="82536">MFRVFGSFGSKGNQSSGEEQSTKTKQVLKQANDFEIALKAMDFVLDDRTDEGLNLLKKAEMETGSDQTILTLARGVIEFLQATLSFETEEMKRAAITLGKAEQMSWKSKQNAEKTNFRSSSIYPPGTVYAVTYTESCLLHALLMLFSESMMEAAKALLKLRRAYTMLQDIMVTVKKAERSKNSSSPSPSEKSQESCGSFVSAETTFISVDIPYKLSSEDKSNPLLLEFAEKIYTMRMGRLSGAHIGNTPSFHRLRDDLGLQTTPSQASDRHSVSDDFDLEQATIDEFIHSGANLCYGILQVVLSLLPPAIGAVLSIVGFKGSREEGLRLVWKATKERNVHGCIGLLGLMFYYDGPFQFTDADFDIPPNDNGSRALNKSRTNDSSLLPGYMDSATLLHPGKILEDALLKARALFPNSALWLLNEAKMLAGKGRLRDSLALMDSIDVNSIRMRQVKSLMVFERAILLVNLHEYNRAADDLISLLDISDWSHALYTYFAGCCYLENWRMTQLGLLNDGKEQFYKERARELIFDAPSLLGKKTFKSKNLPLDRFMLRKVQQFNNMQKKLNLQEPLDSIATSPVHELAYFYNGYNRMTENDLILTKKMLTEYHNPAIDSEDPDQELIRNLLLSLTLRRLGDAERGLALLDDIVLPKIFYIQNGKVKYFKKTEDPWAYPAALYERALFCWKLGGMESLNECREWLLRAQNYAADYELSTRIGMKIKAALDRVENALA</sequence>
<evidence type="ECO:0000250" key="1">
    <source>
        <dbReference type="UniProtKB" id="P36114"/>
    </source>
</evidence>
<evidence type="ECO:0000256" key="2">
    <source>
        <dbReference type="SAM" id="MobiDB-lite"/>
    </source>
</evidence>
<evidence type="ECO:0000269" key="3">
    <source>
    </source>
</evidence>
<evidence type="ECO:0000269" key="4">
    <source>
    </source>
</evidence>
<evidence type="ECO:0000269" key="5">
    <source>
    </source>
</evidence>
<evidence type="ECO:0000303" key="6">
    <source>
    </source>
</evidence>
<evidence type="ECO:0000305" key="7"/>
<evidence type="ECO:0000305" key="8">
    <source>
    </source>
</evidence>
<evidence type="ECO:0000312" key="9">
    <source>
        <dbReference type="SGD" id="S000003618"/>
    </source>
</evidence>
<evidence type="ECO:0007744" key="10">
    <source>
    </source>
</evidence>
<evidence type="ECO:0007744" key="11">
    <source>
    </source>
</evidence>
<accession>P47031</accession>
<accession>D6VWA1</accession>
<organism>
    <name type="scientific">Saccharomyces cerevisiae (strain ATCC 204508 / S288c)</name>
    <name type="common">Baker's yeast</name>
    <dbReference type="NCBI Taxonomy" id="559292"/>
    <lineage>
        <taxon>Eukaryota</taxon>
        <taxon>Fungi</taxon>
        <taxon>Dikarya</taxon>
        <taxon>Ascomycota</taxon>
        <taxon>Saccharomycotina</taxon>
        <taxon>Saccharomycetes</taxon>
        <taxon>Saccharomycetales</taxon>
        <taxon>Saccharomycetaceae</taxon>
        <taxon>Saccharomyces</taxon>
    </lineage>
</organism>
<gene>
    <name evidence="6" type="primary">IML2</name>
    <name evidence="9" type="ordered locus">YJL082W</name>
    <name type="ORF">J1007</name>
</gene>
<dbReference type="EMBL" id="Z49357">
    <property type="protein sequence ID" value="CAA89375.1"/>
    <property type="molecule type" value="Genomic_DNA"/>
</dbReference>
<dbReference type="EMBL" id="X83502">
    <property type="protein sequence ID" value="CAA58488.1"/>
    <property type="molecule type" value="Genomic_DNA"/>
</dbReference>
<dbReference type="EMBL" id="X88851">
    <property type="protein sequence ID" value="CAA61317.1"/>
    <property type="molecule type" value="Genomic_DNA"/>
</dbReference>
<dbReference type="EMBL" id="BK006943">
    <property type="protein sequence ID" value="DAA08717.1"/>
    <property type="molecule type" value="Genomic_DNA"/>
</dbReference>
<dbReference type="PIR" id="S56028">
    <property type="entry name" value="S56028"/>
</dbReference>
<dbReference type="RefSeq" id="NP_012453.1">
    <property type="nucleotide sequence ID" value="NM_001181515.1"/>
</dbReference>
<dbReference type="BioGRID" id="33674">
    <property type="interactions" value="94"/>
</dbReference>
<dbReference type="DIP" id="DIP-4836N"/>
<dbReference type="FunCoup" id="P47031">
    <property type="interactions" value="71"/>
</dbReference>
<dbReference type="IntAct" id="P47031">
    <property type="interactions" value="2"/>
</dbReference>
<dbReference type="MINT" id="P47031"/>
<dbReference type="STRING" id="4932.YJL082W"/>
<dbReference type="iPTMnet" id="P47031"/>
<dbReference type="PaxDb" id="4932-YJL082W"/>
<dbReference type="PeptideAtlas" id="P47031"/>
<dbReference type="EnsemblFungi" id="YJL082W_mRNA">
    <property type="protein sequence ID" value="YJL082W"/>
    <property type="gene ID" value="YJL082W"/>
</dbReference>
<dbReference type="GeneID" id="853363"/>
<dbReference type="KEGG" id="sce:YJL082W"/>
<dbReference type="AGR" id="SGD:S000003618"/>
<dbReference type="SGD" id="S000003618">
    <property type="gene designation" value="IML2"/>
</dbReference>
<dbReference type="VEuPathDB" id="FungiDB:YJL082W"/>
<dbReference type="eggNOG" id="KOG3783">
    <property type="taxonomic scope" value="Eukaryota"/>
</dbReference>
<dbReference type="GeneTree" id="ENSGT00940000176789"/>
<dbReference type="HOGENOM" id="CLU_014926_0_0_1"/>
<dbReference type="InParanoid" id="P47031"/>
<dbReference type="OMA" id="AFHSDIY"/>
<dbReference type="OrthoDB" id="2154985at2759"/>
<dbReference type="BioCyc" id="YEAST:G3O-31539-MONOMER"/>
<dbReference type="BioGRID-ORCS" id="853363">
    <property type="hits" value="4 hits in 10 CRISPR screens"/>
</dbReference>
<dbReference type="PRO" id="PR:P47031"/>
<dbReference type="Proteomes" id="UP000002311">
    <property type="component" value="Chromosome X"/>
</dbReference>
<dbReference type="RNAct" id="P47031">
    <property type="molecule type" value="protein"/>
</dbReference>
<dbReference type="GO" id="GO:0005737">
    <property type="term" value="C:cytoplasm"/>
    <property type="evidence" value="ECO:0007005"/>
    <property type="project" value="SGD"/>
</dbReference>
<dbReference type="GO" id="GO:0005741">
    <property type="term" value="C:mitochondrial outer membrane"/>
    <property type="evidence" value="ECO:0007005"/>
    <property type="project" value="SGD"/>
</dbReference>
<dbReference type="GO" id="GO:0005739">
    <property type="term" value="C:mitochondrion"/>
    <property type="evidence" value="ECO:0007005"/>
    <property type="project" value="SGD"/>
</dbReference>
<dbReference type="GO" id="GO:0005634">
    <property type="term" value="C:nucleus"/>
    <property type="evidence" value="ECO:0007005"/>
    <property type="project" value="SGD"/>
</dbReference>
<dbReference type="GO" id="GO:0071218">
    <property type="term" value="P:cellular response to misfolded protein"/>
    <property type="evidence" value="ECO:0000315"/>
    <property type="project" value="SGD"/>
</dbReference>
<dbReference type="InterPro" id="IPR019412">
    <property type="entry name" value="Iml2/TPR_39"/>
</dbReference>
<dbReference type="PANTHER" id="PTHR31859">
    <property type="entry name" value="TETRATRICOPEPTIDE REPEAT PROTEIN 39 FAMILY MEMBER"/>
    <property type="match status" value="1"/>
</dbReference>
<dbReference type="PANTHER" id="PTHR31859:SF1">
    <property type="entry name" value="TETRATRICOPEPTIDE REPEAT PROTEIN 39C"/>
    <property type="match status" value="1"/>
</dbReference>
<dbReference type="Pfam" id="PF10300">
    <property type="entry name" value="Iml2-TPR_39"/>
    <property type="match status" value="1"/>
</dbReference>
<comment type="function">
    <text evidence="5">Inclusion body (IB) resident protein that interacts strongly with lipid droplet (LD) proteins. Involved in LD-mediated IB clearing after protein folding stress, probably by enabling access to the IBs of an LD-stored soluble sterol derivative that acts as a chaperone in inclusion clearing.</text>
</comment>
<comment type="subunit">
    <text evidence="5">Interacts with lipid droplet proteins PET10 and PDR16.</text>
</comment>
<comment type="subcellular location">
    <subcellularLocation>
        <location evidence="3">Cytoplasm</location>
    </subcellularLocation>
    <subcellularLocation>
        <location evidence="3">Nucleus</location>
    </subcellularLocation>
    <text evidence="5">Localized exclusively in cytoplasmic inclusion bodies under protein folding stress conditions.</text>
</comment>
<comment type="miscellaneous">
    <text evidence="4">Present with 4980 molecules/cell in log phase SD medium.</text>
</comment>
<comment type="similarity">
    <text evidence="7">Belongs to the IML2 family.</text>
</comment>
<name>IML2_YEAST</name>
<reference key="1">
    <citation type="journal article" date="1995" name="Yeast">
        <title>Sequence analysis of a 33.1 kb fragment from the left arm of Saccharomyces cerevisiae chromosome X, including putative proteins with leucine zippers, a fungal Zn(II)2-Cys6 binuclear cluster domain and a putative alpha 2-SCB-alpha 2 binding site.</title>
        <authorList>
            <person name="Miosga T."/>
            <person name="Schaaff-Gerstenschlaeger I."/>
            <person name="Chalwatzis N."/>
            <person name="Baur A."/>
            <person name="Boles E."/>
            <person name="Fournier C."/>
            <person name="Schmitt S."/>
            <person name="Velten C."/>
            <person name="Wilhelm N."/>
            <person name="Zimmermann F.K."/>
        </authorList>
    </citation>
    <scope>NUCLEOTIDE SEQUENCE [GENOMIC DNA]</scope>
    <source>
        <strain>ATCC 204508 / S288c</strain>
    </source>
</reference>
<reference key="2">
    <citation type="journal article" date="1996" name="EMBO J.">
        <title>Complete nucleotide sequence of Saccharomyces cerevisiae chromosome X.</title>
        <authorList>
            <person name="Galibert F."/>
            <person name="Alexandraki D."/>
            <person name="Baur A."/>
            <person name="Boles E."/>
            <person name="Chalwatzis N."/>
            <person name="Chuat J.-C."/>
            <person name="Coster F."/>
            <person name="Cziepluch C."/>
            <person name="de Haan M."/>
            <person name="Domdey H."/>
            <person name="Durand P."/>
            <person name="Entian K.-D."/>
            <person name="Gatius M."/>
            <person name="Goffeau A."/>
            <person name="Grivell L.A."/>
            <person name="Hennemann A."/>
            <person name="Herbert C.J."/>
            <person name="Heumann K."/>
            <person name="Hilger F."/>
            <person name="Hollenberg C.P."/>
            <person name="Huang M.-E."/>
            <person name="Jacq C."/>
            <person name="Jauniaux J.-C."/>
            <person name="Katsoulou C."/>
            <person name="Kirchrath L."/>
            <person name="Kleine K."/>
            <person name="Kordes E."/>
            <person name="Koetter P."/>
            <person name="Liebl S."/>
            <person name="Louis E.J."/>
            <person name="Manus V."/>
            <person name="Mewes H.-W."/>
            <person name="Miosga T."/>
            <person name="Obermaier B."/>
            <person name="Perea J."/>
            <person name="Pohl T.M."/>
            <person name="Portetelle D."/>
            <person name="Pujol A."/>
            <person name="Purnelle B."/>
            <person name="Ramezani Rad M."/>
            <person name="Rasmussen S.W."/>
            <person name="Rose M."/>
            <person name="Rossau R."/>
            <person name="Schaaff-Gerstenschlaeger I."/>
            <person name="Smits P.H.M."/>
            <person name="Scarcez T."/>
            <person name="Soriano N."/>
            <person name="To Van D."/>
            <person name="Tzermia M."/>
            <person name="Van Broekhoven A."/>
            <person name="Vandenbol M."/>
            <person name="Wedler H."/>
            <person name="von Wettstein D."/>
            <person name="Wambutt R."/>
            <person name="Zagulski M."/>
            <person name="Zollner A."/>
            <person name="Karpfinger-Hartl L."/>
        </authorList>
    </citation>
    <scope>NUCLEOTIDE SEQUENCE [LARGE SCALE GENOMIC DNA]</scope>
    <source>
        <strain>ATCC 204508 / S288c</strain>
    </source>
</reference>
<reference key="3">
    <citation type="journal article" date="2014" name="G3 (Bethesda)">
        <title>The reference genome sequence of Saccharomyces cerevisiae: Then and now.</title>
        <authorList>
            <person name="Engel S.R."/>
            <person name="Dietrich F.S."/>
            <person name="Fisk D.G."/>
            <person name="Binkley G."/>
            <person name="Balakrishnan R."/>
            <person name="Costanzo M.C."/>
            <person name="Dwight S.S."/>
            <person name="Hitz B.C."/>
            <person name="Karra K."/>
            <person name="Nash R.S."/>
            <person name="Weng S."/>
            <person name="Wong E.D."/>
            <person name="Lloyd P."/>
            <person name="Skrzypek M.S."/>
            <person name="Miyasato S.R."/>
            <person name="Simison M."/>
            <person name="Cherry J.M."/>
        </authorList>
    </citation>
    <scope>GENOME REANNOTATION</scope>
    <source>
        <strain>ATCC 204508 / S288c</strain>
    </source>
</reference>
<reference key="4">
    <citation type="journal article" date="1999" name="Mol. Gen. Genet.">
        <title>Functional analysis of 150 deletion mutants in Saccharomyces cerevisiae by a systematic approach.</title>
        <authorList>
            <person name="Entian K.-D."/>
            <person name="Schuster T."/>
            <person name="Hegemann J.H."/>
            <person name="Becher D."/>
            <person name="Feldmann H."/>
            <person name="Gueldener U."/>
            <person name="Goetz R."/>
            <person name="Hansen M."/>
            <person name="Hollenberg C.P."/>
            <person name="Jansen G."/>
            <person name="Kramer W."/>
            <person name="Klein S."/>
            <person name="Koetter P."/>
            <person name="Kricke J."/>
            <person name="Launhardt H."/>
            <person name="Mannhaupt G."/>
            <person name="Maierl A."/>
            <person name="Meyer P."/>
            <person name="Mewes W."/>
            <person name="Munder T."/>
            <person name="Niedenthal R.K."/>
            <person name="Ramezani Rad M."/>
            <person name="Roehmer A."/>
            <person name="Roemer A."/>
            <person name="Rose M."/>
            <person name="Schaefer B."/>
            <person name="Siegler M.-L."/>
            <person name="Vetter J."/>
            <person name="Wilhelm N."/>
            <person name="Wolf K."/>
            <person name="Zimmermann F.K."/>
            <person name="Zollner A."/>
            <person name="Hinnen A."/>
        </authorList>
    </citation>
    <scope>GENE NAME</scope>
</reference>
<reference key="5">
    <citation type="journal article" date="2003" name="Nature">
        <title>Global analysis of protein localization in budding yeast.</title>
        <authorList>
            <person name="Huh W.-K."/>
            <person name="Falvo J.V."/>
            <person name="Gerke L.C."/>
            <person name="Carroll A.S."/>
            <person name="Howson R.W."/>
            <person name="Weissman J.S."/>
            <person name="O'Shea E.K."/>
        </authorList>
    </citation>
    <scope>SUBCELLULAR LOCATION [LARGE SCALE ANALYSIS]</scope>
</reference>
<reference key="6">
    <citation type="journal article" date="2003" name="Nature">
        <title>Global analysis of protein expression in yeast.</title>
        <authorList>
            <person name="Ghaemmaghami S."/>
            <person name="Huh W.-K."/>
            <person name="Bower K."/>
            <person name="Howson R.W."/>
            <person name="Belle A."/>
            <person name="Dephoure N."/>
            <person name="O'Shea E.K."/>
            <person name="Weissman J.S."/>
        </authorList>
    </citation>
    <scope>LEVEL OF PROTEIN EXPRESSION [LARGE SCALE ANALYSIS]</scope>
</reference>
<reference key="7">
    <citation type="journal article" date="2007" name="J. Proteome Res.">
        <title>Large-scale phosphorylation analysis of alpha-factor-arrested Saccharomyces cerevisiae.</title>
        <authorList>
            <person name="Li X."/>
            <person name="Gerber S.A."/>
            <person name="Rudner A.D."/>
            <person name="Beausoleil S.A."/>
            <person name="Haas W."/>
            <person name="Villen J."/>
            <person name="Elias J.E."/>
            <person name="Gygi S.P."/>
        </authorList>
    </citation>
    <scope>PHOSPHORYLATION [LARGE SCALE ANALYSIS] AT SER-265; SER-268 AND SER-383</scope>
    <scope>IDENTIFICATION BY MASS SPECTROMETRY [LARGE SCALE ANALYSIS]</scope>
    <source>
        <strain>ADR376</strain>
    </source>
</reference>
<reference key="8">
    <citation type="journal article" date="2008" name="Mol. Cell. Proteomics">
        <title>A multidimensional chromatography technology for in-depth phosphoproteome analysis.</title>
        <authorList>
            <person name="Albuquerque C.P."/>
            <person name="Smolka M.B."/>
            <person name="Payne S.H."/>
            <person name="Bafna V."/>
            <person name="Eng J."/>
            <person name="Zhou H."/>
        </authorList>
    </citation>
    <scope>IDENTIFICATION BY MASS SPECTROMETRY [LARGE SCALE ANALYSIS]</scope>
</reference>
<reference key="9">
    <citation type="journal article" date="2009" name="Science">
        <title>Global analysis of Cdk1 substrate phosphorylation sites provides insights into evolution.</title>
        <authorList>
            <person name="Holt L.J."/>
            <person name="Tuch B.B."/>
            <person name="Villen J."/>
            <person name="Johnson A.D."/>
            <person name="Gygi S.P."/>
            <person name="Morgan D.O."/>
        </authorList>
    </citation>
    <scope>PHOSPHORYLATION [LARGE SCALE ANALYSIS] AT SER-265; SER-268; THR-380; SER-383 AND SER-392</scope>
    <scope>IDENTIFICATION BY MASS SPECTROMETRY [LARGE SCALE ANALYSIS]</scope>
</reference>
<reference key="10">
    <citation type="journal article" date="2015" name="Dev. Cell">
        <title>Lipid droplets are essential for efficient clearance of cytosolic inclusion bodies.</title>
        <authorList>
            <person name="Moldavski O."/>
            <person name="Amen T."/>
            <person name="Levin-Zaidman S."/>
            <person name="Eisenstein M."/>
            <person name="Rogachev I."/>
            <person name="Brandis A."/>
            <person name="Kaganovich D."/>
            <person name="Schuldiner M."/>
        </authorList>
    </citation>
    <scope>FUNCTION</scope>
    <scope>SUBCELLULAR LOCATION</scope>
    <scope>INTERACTION WITH PET10 AND PDR16</scope>
</reference>
<feature type="chain" id="PRO_0000203051" description="Inclusion body clearance protein IML2">
    <location>
        <begin position="1"/>
        <end position="731"/>
    </location>
</feature>
<feature type="region of interest" description="Disordered" evidence="2">
    <location>
        <begin position="1"/>
        <end position="26"/>
    </location>
</feature>
<feature type="compositionally biased region" description="Polar residues" evidence="2">
    <location>
        <begin position="10"/>
        <end position="26"/>
    </location>
</feature>
<feature type="modified residue" description="Phosphoserine" evidence="10 11">
    <location>
        <position position="265"/>
    </location>
</feature>
<feature type="modified residue" description="Phosphoserine" evidence="10 11">
    <location>
        <position position="268"/>
    </location>
</feature>
<feature type="modified residue" description="Phosphoserine" evidence="1">
    <location>
        <position position="378"/>
    </location>
</feature>
<feature type="modified residue" description="Phosphothreonine" evidence="11">
    <location>
        <position position="380"/>
    </location>
</feature>
<feature type="modified residue" description="Phosphoserine" evidence="10 11">
    <location>
        <position position="383"/>
    </location>
</feature>
<feature type="modified residue" description="Phosphoserine" evidence="11">
    <location>
        <position position="392"/>
    </location>
</feature>